<gene>
    <name type="ORF">SPBC1921.04c</name>
</gene>
<protein>
    <recommendedName>
        <fullName>Uncharacterized protein C1921.04c</fullName>
    </recommendedName>
</protein>
<name>YO74_SCHPO</name>
<accession>Q9USX2</accession>
<sequence>MSHTKNLKLILQSKKLSELPTHRKSINMTIPVRALRCPIWLWPTYDAQTIPWKKKKKSEQHELWASVYNRTIGKLQLNKLTFIDLCDCFLNPTLLSNLFAAFSGYYPIEVTIMSRKV</sequence>
<reference key="1">
    <citation type="journal article" date="2002" name="Nature">
        <title>The genome sequence of Schizosaccharomyces pombe.</title>
        <authorList>
            <person name="Wood V."/>
            <person name="Gwilliam R."/>
            <person name="Rajandream M.A."/>
            <person name="Lyne M.H."/>
            <person name="Lyne R."/>
            <person name="Stewart A."/>
            <person name="Sgouros J.G."/>
            <person name="Peat N."/>
            <person name="Hayles J."/>
            <person name="Baker S.G."/>
            <person name="Basham D."/>
            <person name="Bowman S."/>
            <person name="Brooks K."/>
            <person name="Brown D."/>
            <person name="Brown S."/>
            <person name="Chillingworth T."/>
            <person name="Churcher C.M."/>
            <person name="Collins M."/>
            <person name="Connor R."/>
            <person name="Cronin A."/>
            <person name="Davis P."/>
            <person name="Feltwell T."/>
            <person name="Fraser A."/>
            <person name="Gentles S."/>
            <person name="Goble A."/>
            <person name="Hamlin N."/>
            <person name="Harris D.E."/>
            <person name="Hidalgo J."/>
            <person name="Hodgson G."/>
            <person name="Holroyd S."/>
            <person name="Hornsby T."/>
            <person name="Howarth S."/>
            <person name="Huckle E.J."/>
            <person name="Hunt S."/>
            <person name="Jagels K."/>
            <person name="James K.D."/>
            <person name="Jones L."/>
            <person name="Jones M."/>
            <person name="Leather S."/>
            <person name="McDonald S."/>
            <person name="McLean J."/>
            <person name="Mooney P."/>
            <person name="Moule S."/>
            <person name="Mungall K.L."/>
            <person name="Murphy L.D."/>
            <person name="Niblett D."/>
            <person name="Odell C."/>
            <person name="Oliver K."/>
            <person name="O'Neil S."/>
            <person name="Pearson D."/>
            <person name="Quail M.A."/>
            <person name="Rabbinowitsch E."/>
            <person name="Rutherford K.M."/>
            <person name="Rutter S."/>
            <person name="Saunders D."/>
            <person name="Seeger K."/>
            <person name="Sharp S."/>
            <person name="Skelton J."/>
            <person name="Simmonds M.N."/>
            <person name="Squares R."/>
            <person name="Squares S."/>
            <person name="Stevens K."/>
            <person name="Taylor K."/>
            <person name="Taylor R.G."/>
            <person name="Tivey A."/>
            <person name="Walsh S.V."/>
            <person name="Warren T."/>
            <person name="Whitehead S."/>
            <person name="Woodward J.R."/>
            <person name="Volckaert G."/>
            <person name="Aert R."/>
            <person name="Robben J."/>
            <person name="Grymonprez B."/>
            <person name="Weltjens I."/>
            <person name="Vanstreels E."/>
            <person name="Rieger M."/>
            <person name="Schaefer M."/>
            <person name="Mueller-Auer S."/>
            <person name="Gabel C."/>
            <person name="Fuchs M."/>
            <person name="Duesterhoeft A."/>
            <person name="Fritzc C."/>
            <person name="Holzer E."/>
            <person name="Moestl D."/>
            <person name="Hilbert H."/>
            <person name="Borzym K."/>
            <person name="Langer I."/>
            <person name="Beck A."/>
            <person name="Lehrach H."/>
            <person name="Reinhardt R."/>
            <person name="Pohl T.M."/>
            <person name="Eger P."/>
            <person name="Zimmermann W."/>
            <person name="Wedler H."/>
            <person name="Wambutt R."/>
            <person name="Purnelle B."/>
            <person name="Goffeau A."/>
            <person name="Cadieu E."/>
            <person name="Dreano S."/>
            <person name="Gloux S."/>
            <person name="Lelaure V."/>
            <person name="Mottier S."/>
            <person name="Galibert F."/>
            <person name="Aves S.J."/>
            <person name="Xiang Z."/>
            <person name="Hunt C."/>
            <person name="Moore K."/>
            <person name="Hurst S.M."/>
            <person name="Lucas M."/>
            <person name="Rochet M."/>
            <person name="Gaillardin C."/>
            <person name="Tallada V.A."/>
            <person name="Garzon A."/>
            <person name="Thode G."/>
            <person name="Daga R.R."/>
            <person name="Cruzado L."/>
            <person name="Jimenez J."/>
            <person name="Sanchez M."/>
            <person name="del Rey F."/>
            <person name="Benito J."/>
            <person name="Dominguez A."/>
            <person name="Revuelta J.L."/>
            <person name="Moreno S."/>
            <person name="Armstrong J."/>
            <person name="Forsburg S.L."/>
            <person name="Cerutti L."/>
            <person name="Lowe T."/>
            <person name="McCombie W.R."/>
            <person name="Paulsen I."/>
            <person name="Potashkin J."/>
            <person name="Shpakovski G.V."/>
            <person name="Ussery D."/>
            <person name="Barrell B.G."/>
            <person name="Nurse P."/>
        </authorList>
    </citation>
    <scope>NUCLEOTIDE SEQUENCE [LARGE SCALE GENOMIC DNA]</scope>
    <source>
        <strain>972 / ATCC 24843</strain>
    </source>
</reference>
<organism>
    <name type="scientific">Schizosaccharomyces pombe (strain 972 / ATCC 24843)</name>
    <name type="common">Fission yeast</name>
    <dbReference type="NCBI Taxonomy" id="284812"/>
    <lineage>
        <taxon>Eukaryota</taxon>
        <taxon>Fungi</taxon>
        <taxon>Dikarya</taxon>
        <taxon>Ascomycota</taxon>
        <taxon>Taphrinomycotina</taxon>
        <taxon>Schizosaccharomycetes</taxon>
        <taxon>Schizosaccharomycetales</taxon>
        <taxon>Schizosaccharomycetaceae</taxon>
        <taxon>Schizosaccharomyces</taxon>
    </lineage>
</organism>
<keyword id="KW-1185">Reference proteome</keyword>
<dbReference type="EMBL" id="CU329671">
    <property type="protein sequence ID" value="CAB58970.1"/>
    <property type="molecule type" value="Genomic_DNA"/>
</dbReference>
<dbReference type="PIR" id="T39788">
    <property type="entry name" value="T39788"/>
</dbReference>
<dbReference type="RefSeq" id="NP_595997.1">
    <property type="nucleotide sequence ID" value="NM_001021905.2"/>
</dbReference>
<dbReference type="BioGRID" id="277361">
    <property type="interactions" value="19"/>
</dbReference>
<dbReference type="PaxDb" id="4896-SPBC1921.04c.1"/>
<dbReference type="EnsemblFungi" id="SPBC1921.04c.1">
    <property type="protein sequence ID" value="SPBC1921.04c.1:pep"/>
    <property type="gene ID" value="SPBC1921.04c"/>
</dbReference>
<dbReference type="KEGG" id="spo:2540844"/>
<dbReference type="PomBase" id="SPBC1921.04c"/>
<dbReference type="VEuPathDB" id="FungiDB:SPBC1921.04c"/>
<dbReference type="HOGENOM" id="CLU_2086176_0_0_1"/>
<dbReference type="InParanoid" id="Q9USX2"/>
<dbReference type="PRO" id="PR:Q9USX2"/>
<dbReference type="Proteomes" id="UP000002485">
    <property type="component" value="Chromosome II"/>
</dbReference>
<proteinExistence type="predicted"/>
<feature type="chain" id="PRO_0000116867" description="Uncharacterized protein C1921.04c">
    <location>
        <begin position="1"/>
        <end position="117"/>
    </location>
</feature>